<protein>
    <recommendedName>
        <fullName>Probable indole-3-pyruvate monooxygenase YUCCA8</fullName>
        <ecNumber>1.14.13.168</ecNumber>
    </recommendedName>
    <alternativeName>
        <fullName>Flavin-containing monooxygenase YUCCA8</fullName>
    </alternativeName>
</protein>
<evidence type="ECO:0000250" key="1"/>
<evidence type="ECO:0000255" key="2"/>
<evidence type="ECO:0000269" key="3">
    <source>
    </source>
</evidence>
<evidence type="ECO:0000269" key="4">
    <source>
    </source>
</evidence>
<evidence type="ECO:0000269" key="5">
    <source>
    </source>
</evidence>
<evidence type="ECO:0000269" key="6">
    <source>
    </source>
</evidence>
<evidence type="ECO:0000305" key="7"/>
<comment type="function">
    <text evidence="5">Involved in auxin biosynthesis. Belongs to the set of redundant YUCCA genes probably responsible for auxin biosynthesis in roots.</text>
</comment>
<comment type="catalytic activity">
    <reaction>
        <text>indole-3-pyruvate + NADPH + O2 + H(+) = (indol-3-yl)acetate + CO2 + NADP(+) + H2O</text>
        <dbReference type="Rhea" id="RHEA:34331"/>
        <dbReference type="ChEBI" id="CHEBI:15377"/>
        <dbReference type="ChEBI" id="CHEBI:15378"/>
        <dbReference type="ChEBI" id="CHEBI:15379"/>
        <dbReference type="ChEBI" id="CHEBI:16526"/>
        <dbReference type="ChEBI" id="CHEBI:17640"/>
        <dbReference type="ChEBI" id="CHEBI:30854"/>
        <dbReference type="ChEBI" id="CHEBI:57783"/>
        <dbReference type="ChEBI" id="CHEBI:58349"/>
        <dbReference type="EC" id="1.14.13.168"/>
    </reaction>
</comment>
<comment type="cofactor">
    <cofactor evidence="1">
        <name>FAD</name>
        <dbReference type="ChEBI" id="CHEBI:57692"/>
    </cofactor>
</comment>
<comment type="pathway">
    <text>Plant hormone metabolism; auxin biosynthesis.</text>
</comment>
<comment type="tissue specificity">
    <text evidence="3">Expressed in root tips and in hydathodes. Expressed in root vasculature and quiescent center, but not in the meristematic zone of the root tip.</text>
</comment>
<comment type="induction">
    <text evidence="3 4 6">Up-regulated by high temperature via activation by PIF4. Positively regulated by STY1 and during the day by REV1.</text>
</comment>
<comment type="similarity">
    <text evidence="7">Belongs to the FMO family.</text>
</comment>
<dbReference type="EC" id="1.14.13.168"/>
<dbReference type="EMBL" id="AL035353">
    <property type="protein sequence ID" value="CAA22980.1"/>
    <property type="molecule type" value="Genomic_DNA"/>
</dbReference>
<dbReference type="EMBL" id="AL161573">
    <property type="protein sequence ID" value="CAB81460.1"/>
    <property type="molecule type" value="Genomic_DNA"/>
</dbReference>
<dbReference type="EMBL" id="CP002687">
    <property type="protein sequence ID" value="AEE85534.1"/>
    <property type="molecule type" value="Genomic_DNA"/>
</dbReference>
<dbReference type="EMBL" id="BT029238">
    <property type="protein sequence ID" value="ABJ98570.1"/>
    <property type="molecule type" value="mRNA"/>
</dbReference>
<dbReference type="PIR" id="T04527">
    <property type="entry name" value="T04527"/>
</dbReference>
<dbReference type="RefSeq" id="NP_194601.1">
    <property type="nucleotide sequence ID" value="NM_119016.3"/>
</dbReference>
<dbReference type="SMR" id="Q9SVU0"/>
<dbReference type="BioGRID" id="14280">
    <property type="interactions" value="5"/>
</dbReference>
<dbReference type="IntAct" id="Q9SVU0">
    <property type="interactions" value="5"/>
</dbReference>
<dbReference type="STRING" id="3702.Q9SVU0"/>
<dbReference type="PaxDb" id="3702-AT4G28720.1"/>
<dbReference type="ProteomicsDB" id="232328"/>
<dbReference type="EnsemblPlants" id="AT4G28720.1">
    <property type="protein sequence ID" value="AT4G28720.1"/>
    <property type="gene ID" value="AT4G28720"/>
</dbReference>
<dbReference type="GeneID" id="828993"/>
<dbReference type="Gramene" id="AT4G28720.1">
    <property type="protein sequence ID" value="AT4G28720.1"/>
    <property type="gene ID" value="AT4G28720"/>
</dbReference>
<dbReference type="KEGG" id="ath:AT4G28720"/>
<dbReference type="Araport" id="AT4G28720"/>
<dbReference type="TAIR" id="AT4G28720">
    <property type="gene designation" value="YUC8"/>
</dbReference>
<dbReference type="eggNOG" id="KOG1399">
    <property type="taxonomic scope" value="Eukaryota"/>
</dbReference>
<dbReference type="HOGENOM" id="CLU_006909_2_0_1"/>
<dbReference type="InParanoid" id="Q9SVU0"/>
<dbReference type="OMA" id="NTMGKTP"/>
<dbReference type="OrthoDB" id="66881at2759"/>
<dbReference type="PhylomeDB" id="Q9SVU0"/>
<dbReference type="UniPathway" id="UPA00151"/>
<dbReference type="PRO" id="PR:Q9SVU0"/>
<dbReference type="Proteomes" id="UP000006548">
    <property type="component" value="Chromosome 4"/>
</dbReference>
<dbReference type="ExpressionAtlas" id="Q9SVU0">
    <property type="expression patterns" value="baseline and differential"/>
</dbReference>
<dbReference type="GO" id="GO:0050660">
    <property type="term" value="F:flavin adenine dinucleotide binding"/>
    <property type="evidence" value="ECO:0007669"/>
    <property type="project" value="InterPro"/>
</dbReference>
<dbReference type="GO" id="GO:0103075">
    <property type="term" value="F:indole-3-pyruvate monooxygenase activity"/>
    <property type="evidence" value="ECO:0000314"/>
    <property type="project" value="TAIR"/>
</dbReference>
<dbReference type="GO" id="GO:0004499">
    <property type="term" value="F:N,N-dimethylaniline monooxygenase activity"/>
    <property type="evidence" value="ECO:0007669"/>
    <property type="project" value="InterPro"/>
</dbReference>
<dbReference type="GO" id="GO:0050661">
    <property type="term" value="F:NADP binding"/>
    <property type="evidence" value="ECO:0007669"/>
    <property type="project" value="InterPro"/>
</dbReference>
<dbReference type="GO" id="GO:0009851">
    <property type="term" value="P:auxin biosynthetic process"/>
    <property type="evidence" value="ECO:0000304"/>
    <property type="project" value="TAIR"/>
</dbReference>
<dbReference type="GO" id="GO:0009742">
    <property type="term" value="P:brassinosteroid mediated signaling pathway"/>
    <property type="evidence" value="ECO:0000316"/>
    <property type="project" value="TAIR"/>
</dbReference>
<dbReference type="GO" id="GO:0010600">
    <property type="term" value="P:regulation of auxin biosynthetic process"/>
    <property type="evidence" value="ECO:0000315"/>
    <property type="project" value="TAIR"/>
</dbReference>
<dbReference type="GO" id="GO:0009735">
    <property type="term" value="P:response to cytokinin"/>
    <property type="evidence" value="ECO:0000270"/>
    <property type="project" value="TAIR"/>
</dbReference>
<dbReference type="GO" id="GO:0009723">
    <property type="term" value="P:response to ethylene"/>
    <property type="evidence" value="ECO:0000270"/>
    <property type="project" value="TAIR"/>
</dbReference>
<dbReference type="FunFam" id="3.50.50.60:FF:000100">
    <property type="entry name" value="Flavin-containing monooxygenase"/>
    <property type="match status" value="1"/>
</dbReference>
<dbReference type="Gene3D" id="3.50.50.60">
    <property type="entry name" value="FAD/NAD(P)-binding domain"/>
    <property type="match status" value="1"/>
</dbReference>
<dbReference type="InterPro" id="IPR050982">
    <property type="entry name" value="Auxin_biosynth/cation_transpt"/>
</dbReference>
<dbReference type="InterPro" id="IPR036188">
    <property type="entry name" value="FAD/NAD-bd_sf"/>
</dbReference>
<dbReference type="InterPro" id="IPR020946">
    <property type="entry name" value="Flavin_mOase-like"/>
</dbReference>
<dbReference type="PANTHER" id="PTHR43539">
    <property type="entry name" value="FLAVIN-BINDING MONOOXYGENASE-LIKE PROTEIN (AFU_ORTHOLOGUE AFUA_4G09220)"/>
    <property type="match status" value="1"/>
</dbReference>
<dbReference type="PANTHER" id="PTHR43539:SF11">
    <property type="entry name" value="INDOLE-3-PYRUVATE MONOOXYGENASE YUCCA8-RELATED"/>
    <property type="match status" value="1"/>
</dbReference>
<dbReference type="Pfam" id="PF00743">
    <property type="entry name" value="FMO-like"/>
    <property type="match status" value="1"/>
</dbReference>
<dbReference type="PRINTS" id="PR00368">
    <property type="entry name" value="FADPNR"/>
</dbReference>
<dbReference type="PRINTS" id="PR00469">
    <property type="entry name" value="PNDRDTASEII"/>
</dbReference>
<dbReference type="SUPFAM" id="SSF51905">
    <property type="entry name" value="FAD/NAD(P)-binding domain"/>
    <property type="match status" value="2"/>
</dbReference>
<keyword id="KW-0073">Auxin biosynthesis</keyword>
<keyword id="KW-0274">FAD</keyword>
<keyword id="KW-0285">Flavoprotein</keyword>
<keyword id="KW-0503">Monooxygenase</keyword>
<keyword id="KW-0521">NADP</keyword>
<keyword id="KW-0560">Oxidoreductase</keyword>
<keyword id="KW-1185">Reference proteome</keyword>
<sequence>MENMFRLMDQDQDLTNNRCIWVNGPVIVGAGPSGLATAACLHEQNVPFVVLERADCIASLWQKRTYDRLKLHLPKQFCQLPKMPFPEDFPEYPTKRQFIDYLESYATRFEINPKFNECVQTARFDETSGLWRVKTVSKSESTQTEVEYICRWLVVATGENAERVMPEIDGLSEFSGEVIHACDYKSGEKFAGKKVLVVGCGNSGMEVSLDLANHFAKPSMVVRSSLHVMPREVMGKSTFELAMKMLRWFPLWLVDKILLVLSWMVLGNIEKYGLKRPEMGPMELKSVKGKTPVLDIGAIEKIRLGKINVVPGIKRFNGNKVELVNGEQLDVDSVVLATGYRSNVPYWLQENEFFAKNGFPKTVADNNGWKGRTGLYAVGFTRKGLSGASMDAVKIAQDIGSVWQLETKQPTKRSRGSLRRCISQQF</sequence>
<reference key="1">
    <citation type="journal article" date="1999" name="Nature">
        <title>Sequence and analysis of chromosome 4 of the plant Arabidopsis thaliana.</title>
        <authorList>
            <person name="Mayer K.F.X."/>
            <person name="Schueller C."/>
            <person name="Wambutt R."/>
            <person name="Murphy G."/>
            <person name="Volckaert G."/>
            <person name="Pohl T."/>
            <person name="Duesterhoeft A."/>
            <person name="Stiekema W."/>
            <person name="Entian K.-D."/>
            <person name="Terryn N."/>
            <person name="Harris B."/>
            <person name="Ansorge W."/>
            <person name="Brandt P."/>
            <person name="Grivell L.A."/>
            <person name="Rieger M."/>
            <person name="Weichselgartner M."/>
            <person name="de Simone V."/>
            <person name="Obermaier B."/>
            <person name="Mache R."/>
            <person name="Mueller M."/>
            <person name="Kreis M."/>
            <person name="Delseny M."/>
            <person name="Puigdomenech P."/>
            <person name="Watson M."/>
            <person name="Schmidtheini T."/>
            <person name="Reichert B."/>
            <person name="Portetelle D."/>
            <person name="Perez-Alonso M."/>
            <person name="Boutry M."/>
            <person name="Bancroft I."/>
            <person name="Vos P."/>
            <person name="Hoheisel J."/>
            <person name="Zimmermann W."/>
            <person name="Wedler H."/>
            <person name="Ridley P."/>
            <person name="Langham S.-A."/>
            <person name="McCullagh B."/>
            <person name="Bilham L."/>
            <person name="Robben J."/>
            <person name="van der Schueren J."/>
            <person name="Grymonprez B."/>
            <person name="Chuang Y.-J."/>
            <person name="Vandenbussche F."/>
            <person name="Braeken M."/>
            <person name="Weltjens I."/>
            <person name="Voet M."/>
            <person name="Bastiaens I."/>
            <person name="Aert R."/>
            <person name="Defoor E."/>
            <person name="Weitzenegger T."/>
            <person name="Bothe G."/>
            <person name="Ramsperger U."/>
            <person name="Hilbert H."/>
            <person name="Braun M."/>
            <person name="Holzer E."/>
            <person name="Brandt A."/>
            <person name="Peters S."/>
            <person name="van Staveren M."/>
            <person name="Dirkse W."/>
            <person name="Mooijman P."/>
            <person name="Klein Lankhorst R."/>
            <person name="Rose M."/>
            <person name="Hauf J."/>
            <person name="Koetter P."/>
            <person name="Berneiser S."/>
            <person name="Hempel S."/>
            <person name="Feldpausch M."/>
            <person name="Lamberth S."/>
            <person name="Van den Daele H."/>
            <person name="De Keyser A."/>
            <person name="Buysshaert C."/>
            <person name="Gielen J."/>
            <person name="Villarroel R."/>
            <person name="De Clercq R."/>
            <person name="van Montagu M."/>
            <person name="Rogers J."/>
            <person name="Cronin A."/>
            <person name="Quail M.A."/>
            <person name="Bray-Allen S."/>
            <person name="Clark L."/>
            <person name="Doggett J."/>
            <person name="Hall S."/>
            <person name="Kay M."/>
            <person name="Lennard N."/>
            <person name="McLay K."/>
            <person name="Mayes R."/>
            <person name="Pettett A."/>
            <person name="Rajandream M.A."/>
            <person name="Lyne M."/>
            <person name="Benes V."/>
            <person name="Rechmann S."/>
            <person name="Borkova D."/>
            <person name="Bloecker H."/>
            <person name="Scharfe M."/>
            <person name="Grimm M."/>
            <person name="Loehnert T.-H."/>
            <person name="Dose S."/>
            <person name="de Haan M."/>
            <person name="Maarse A.C."/>
            <person name="Schaefer M."/>
            <person name="Mueller-Auer S."/>
            <person name="Gabel C."/>
            <person name="Fuchs M."/>
            <person name="Fartmann B."/>
            <person name="Granderath K."/>
            <person name="Dauner D."/>
            <person name="Herzl A."/>
            <person name="Neumann S."/>
            <person name="Argiriou A."/>
            <person name="Vitale D."/>
            <person name="Liguori R."/>
            <person name="Piravandi E."/>
            <person name="Massenet O."/>
            <person name="Quigley F."/>
            <person name="Clabauld G."/>
            <person name="Muendlein A."/>
            <person name="Felber R."/>
            <person name="Schnabl S."/>
            <person name="Hiller R."/>
            <person name="Schmidt W."/>
            <person name="Lecharny A."/>
            <person name="Aubourg S."/>
            <person name="Chefdor F."/>
            <person name="Cooke R."/>
            <person name="Berger C."/>
            <person name="Monfort A."/>
            <person name="Casacuberta E."/>
            <person name="Gibbons T."/>
            <person name="Weber N."/>
            <person name="Vandenbol M."/>
            <person name="Bargues M."/>
            <person name="Terol J."/>
            <person name="Torres A."/>
            <person name="Perez-Perez A."/>
            <person name="Purnelle B."/>
            <person name="Bent E."/>
            <person name="Johnson S."/>
            <person name="Tacon D."/>
            <person name="Jesse T."/>
            <person name="Heijnen L."/>
            <person name="Schwarz S."/>
            <person name="Scholler P."/>
            <person name="Heber S."/>
            <person name="Francs P."/>
            <person name="Bielke C."/>
            <person name="Frishman D."/>
            <person name="Haase D."/>
            <person name="Lemcke K."/>
            <person name="Mewes H.-W."/>
            <person name="Stocker S."/>
            <person name="Zaccaria P."/>
            <person name="Bevan M."/>
            <person name="Wilson R.K."/>
            <person name="de la Bastide M."/>
            <person name="Habermann K."/>
            <person name="Parnell L."/>
            <person name="Dedhia N."/>
            <person name="Gnoj L."/>
            <person name="Schutz K."/>
            <person name="Huang E."/>
            <person name="Spiegel L."/>
            <person name="Sekhon M."/>
            <person name="Murray J."/>
            <person name="Sheet P."/>
            <person name="Cordes M."/>
            <person name="Abu-Threideh J."/>
            <person name="Stoneking T."/>
            <person name="Kalicki J."/>
            <person name="Graves T."/>
            <person name="Harmon G."/>
            <person name="Edwards J."/>
            <person name="Latreille P."/>
            <person name="Courtney L."/>
            <person name="Cloud J."/>
            <person name="Abbott A."/>
            <person name="Scott K."/>
            <person name="Johnson D."/>
            <person name="Minx P."/>
            <person name="Bentley D."/>
            <person name="Fulton B."/>
            <person name="Miller N."/>
            <person name="Greco T."/>
            <person name="Kemp K."/>
            <person name="Kramer J."/>
            <person name="Fulton L."/>
            <person name="Mardis E."/>
            <person name="Dante M."/>
            <person name="Pepin K."/>
            <person name="Hillier L.W."/>
            <person name="Nelson J."/>
            <person name="Spieth J."/>
            <person name="Ryan E."/>
            <person name="Andrews S."/>
            <person name="Geisel C."/>
            <person name="Layman D."/>
            <person name="Du H."/>
            <person name="Ali J."/>
            <person name="Berghoff A."/>
            <person name="Jones K."/>
            <person name="Drone K."/>
            <person name="Cotton M."/>
            <person name="Joshu C."/>
            <person name="Antonoiu B."/>
            <person name="Zidanic M."/>
            <person name="Strong C."/>
            <person name="Sun H."/>
            <person name="Lamar B."/>
            <person name="Yordan C."/>
            <person name="Ma P."/>
            <person name="Zhong J."/>
            <person name="Preston R."/>
            <person name="Vil D."/>
            <person name="Shekher M."/>
            <person name="Matero A."/>
            <person name="Shah R."/>
            <person name="Swaby I.K."/>
            <person name="O'Shaughnessy A."/>
            <person name="Rodriguez M."/>
            <person name="Hoffman J."/>
            <person name="Till S."/>
            <person name="Granat S."/>
            <person name="Shohdy N."/>
            <person name="Hasegawa A."/>
            <person name="Hameed A."/>
            <person name="Lodhi M."/>
            <person name="Johnson A."/>
            <person name="Chen E."/>
            <person name="Marra M.A."/>
            <person name="Martienssen R."/>
            <person name="McCombie W.R."/>
        </authorList>
    </citation>
    <scope>NUCLEOTIDE SEQUENCE [LARGE SCALE GENOMIC DNA]</scope>
    <source>
        <strain>cv. Columbia</strain>
    </source>
</reference>
<reference key="2">
    <citation type="journal article" date="2017" name="Plant J.">
        <title>Araport11: a complete reannotation of the Arabidopsis thaliana reference genome.</title>
        <authorList>
            <person name="Cheng C.Y."/>
            <person name="Krishnakumar V."/>
            <person name="Chan A.P."/>
            <person name="Thibaud-Nissen F."/>
            <person name="Schobel S."/>
            <person name="Town C.D."/>
        </authorList>
    </citation>
    <scope>GENOME REANNOTATION</scope>
    <source>
        <strain>cv. Columbia</strain>
    </source>
</reference>
<reference key="3">
    <citation type="submission" date="2006-10" db="EMBL/GenBank/DDBJ databases">
        <title>Arabidopsis ORF clones.</title>
        <authorList>
            <person name="Quinitio C."/>
            <person name="Chen H."/>
            <person name="Kim C.J."/>
            <person name="Shinn P."/>
            <person name="Ecker J.R."/>
        </authorList>
    </citation>
    <scope>NUCLEOTIDE SEQUENCE [LARGE SCALE MRNA]</scope>
    <source>
        <strain>cv. Columbia</strain>
    </source>
</reference>
<reference key="4">
    <citation type="journal article" date="2006" name="Genes Dev.">
        <title>Auxin biosynthesis by the YUCCA flavin monooxygenases controls the formation of floral organs and vascular tissues in Arabidopsis.</title>
        <authorList>
            <person name="Cheng Y."/>
            <person name="Dai X."/>
            <person name="Zhao Y."/>
        </authorList>
    </citation>
    <scope>GENE FAMILY</scope>
    <scope>NOMENCLATURE</scope>
</reference>
<reference key="5">
    <citation type="journal article" date="2007" name="Plant J.">
        <title>Identification of a flavin-monooxygenase as the S-oxygenating enzyme in aliphatic glucosinolate biosynthesis in Arabidopsis.</title>
        <authorList>
            <person name="Hansen B.G."/>
            <person name="Kliebenstein D.J."/>
            <person name="Halkier B.A."/>
        </authorList>
    </citation>
    <scope>GENE FAMILY</scope>
    <source>
        <strain>cv. Columbia</strain>
    </source>
</reference>
<reference key="6">
    <citation type="journal article" date="2009" name="Proc. Natl. Acad. Sci. U.S.A.">
        <title>REVEILLE1, a Myb-like transcription factor, integrates the circadian clock and auxin pathways.</title>
        <authorList>
            <person name="Rawat R."/>
            <person name="Schwartz J."/>
            <person name="Jones M.A."/>
            <person name="Sairanen I."/>
            <person name="Cheng Y."/>
            <person name="Andersson C.R."/>
            <person name="Zhao Y."/>
            <person name="Ljung K."/>
            <person name="Harmer S.L."/>
        </authorList>
    </citation>
    <scope>INDUCTION BY RVE1</scope>
    <scope>TISSUE SPECIFICITY</scope>
</reference>
<reference key="7">
    <citation type="journal article" date="2010" name="Plant Cell">
        <title>The Arabidopsis thaliana STYLISH1 protein acts as a transcriptional activator regulating auxin biosynthesis.</title>
        <authorList>
            <person name="Eklund D.M."/>
            <person name="Staaldal V."/>
            <person name="Valsecchi I."/>
            <person name="Cierlik I."/>
            <person name="Eriksson C."/>
            <person name="Hiratsu K."/>
            <person name="Ohme-Takagi M."/>
            <person name="Sundstroem J.F."/>
            <person name="Thelander M."/>
            <person name="Ezcurra I."/>
            <person name="Sundberg E."/>
        </authorList>
    </citation>
    <scope>INDUCTION BY STY1</scope>
</reference>
<reference key="8">
    <citation type="journal article" date="2011" name="Proc. Natl. Acad. Sci. U.S.A.">
        <title>Conversion of tryptophan to indole-3-acetic acid by TRYPTOPHAN AMINOTRANSFERASES OF ARABIDOPSIS and YUCCAs in Arabidopsis.</title>
        <authorList>
            <person name="Won C."/>
            <person name="Shen X."/>
            <person name="Mashiguchi K."/>
            <person name="Zheng Z."/>
            <person name="Dai X."/>
            <person name="Cheng Y."/>
            <person name="Kasahara H."/>
            <person name="Kamiya Y."/>
            <person name="Chory J."/>
            <person name="Zhao Y."/>
        </authorList>
    </citation>
    <scope>FUNCTION</scope>
</reference>
<reference key="9">
    <citation type="journal article" date="2012" name="PLoS Genet.">
        <title>PIF4-mediated activation of YUCCA8 expression integrates temperature into the auxin pathway in regulating arabidopsis hypocotyl growth.</title>
        <authorList>
            <person name="Sun J."/>
            <person name="Qi L."/>
            <person name="Li Y."/>
            <person name="Chu J."/>
            <person name="Li C."/>
        </authorList>
    </citation>
    <scope>INDUCTION BY HIGH TEMPERATURE</scope>
</reference>
<proteinExistence type="evidence at transcript level"/>
<gene>
    <name type="primary">YUC8</name>
    <name type="synonym">BAS3</name>
    <name type="synonym">YUCCA8</name>
    <name type="ordered locus">At4g28720</name>
    <name type="ORF">F16A16.170</name>
</gene>
<feature type="chain" id="PRO_0000400075" description="Probable indole-3-pyruvate monooxygenase YUCCA8">
    <location>
        <begin position="1"/>
        <end position="426"/>
    </location>
</feature>
<feature type="binding site" evidence="2">
    <location>
        <begin position="29"/>
        <end position="34"/>
    </location>
    <ligand>
        <name>FAD</name>
        <dbReference type="ChEBI" id="CHEBI:57692"/>
    </ligand>
</feature>
<feature type="binding site" evidence="2">
    <location>
        <begin position="199"/>
        <end position="204"/>
    </location>
    <ligand>
        <name>NADP(+)</name>
        <dbReference type="ChEBI" id="CHEBI:58349"/>
    </ligand>
</feature>
<name>YUC8_ARATH</name>
<accession>Q9SVU0</accession>
<organism>
    <name type="scientific">Arabidopsis thaliana</name>
    <name type="common">Mouse-ear cress</name>
    <dbReference type="NCBI Taxonomy" id="3702"/>
    <lineage>
        <taxon>Eukaryota</taxon>
        <taxon>Viridiplantae</taxon>
        <taxon>Streptophyta</taxon>
        <taxon>Embryophyta</taxon>
        <taxon>Tracheophyta</taxon>
        <taxon>Spermatophyta</taxon>
        <taxon>Magnoliopsida</taxon>
        <taxon>eudicotyledons</taxon>
        <taxon>Gunneridae</taxon>
        <taxon>Pentapetalae</taxon>
        <taxon>rosids</taxon>
        <taxon>malvids</taxon>
        <taxon>Brassicales</taxon>
        <taxon>Brassicaceae</taxon>
        <taxon>Camelineae</taxon>
        <taxon>Arabidopsis</taxon>
    </lineage>
</organism>